<reference key="1">
    <citation type="journal article" date="2010" name="ISME J.">
        <title>The complete genome sequence of the algal symbiont Dinoroseobacter shibae: a hitchhiker's guide to life in the sea.</title>
        <authorList>
            <person name="Wagner-Dobler I."/>
            <person name="Ballhausen B."/>
            <person name="Berger M."/>
            <person name="Brinkhoff T."/>
            <person name="Buchholz I."/>
            <person name="Bunk B."/>
            <person name="Cypionka H."/>
            <person name="Daniel R."/>
            <person name="Drepper T."/>
            <person name="Gerdts G."/>
            <person name="Hahnke S."/>
            <person name="Han C."/>
            <person name="Jahn D."/>
            <person name="Kalhoefer D."/>
            <person name="Kiss H."/>
            <person name="Klenk H.P."/>
            <person name="Kyrpides N."/>
            <person name="Liebl W."/>
            <person name="Liesegang H."/>
            <person name="Meincke L."/>
            <person name="Pati A."/>
            <person name="Petersen J."/>
            <person name="Piekarski T."/>
            <person name="Pommerenke C."/>
            <person name="Pradella S."/>
            <person name="Pukall R."/>
            <person name="Rabus R."/>
            <person name="Stackebrandt E."/>
            <person name="Thole S."/>
            <person name="Thompson L."/>
            <person name="Tielen P."/>
            <person name="Tomasch J."/>
            <person name="von Jan M."/>
            <person name="Wanphrut N."/>
            <person name="Wichels A."/>
            <person name="Zech H."/>
            <person name="Simon M."/>
        </authorList>
    </citation>
    <scope>NUCLEOTIDE SEQUENCE [LARGE SCALE GENOMIC DNA]</scope>
    <source>
        <strain>DSM 16493 / NCIMB 14021 / DFL 12</strain>
    </source>
</reference>
<evidence type="ECO:0000255" key="1">
    <source>
        <dbReference type="HAMAP-Rule" id="MF_01021"/>
    </source>
</evidence>
<keyword id="KW-0028">Amino-acid biosynthesis</keyword>
<keyword id="KW-0963">Cytoplasm</keyword>
<keyword id="KW-0368">Histidine biosynthesis</keyword>
<keyword id="KW-0378">Hydrolase</keyword>
<keyword id="KW-0460">Magnesium</keyword>
<keyword id="KW-0479">Metal-binding</keyword>
<keyword id="KW-1185">Reference proteome</keyword>
<keyword id="KW-0862">Zinc</keyword>
<name>HIS3_DINSH</name>
<comment type="function">
    <text evidence="1">Catalyzes the hydrolysis of the adenine ring of phosphoribosyl-AMP.</text>
</comment>
<comment type="catalytic activity">
    <reaction evidence="1">
        <text>1-(5-phospho-beta-D-ribosyl)-5'-AMP + H2O = 1-(5-phospho-beta-D-ribosyl)-5-[(5-phospho-beta-D-ribosylamino)methylideneamino]imidazole-4-carboxamide</text>
        <dbReference type="Rhea" id="RHEA:20049"/>
        <dbReference type="ChEBI" id="CHEBI:15377"/>
        <dbReference type="ChEBI" id="CHEBI:58435"/>
        <dbReference type="ChEBI" id="CHEBI:59457"/>
        <dbReference type="EC" id="3.5.4.19"/>
    </reaction>
</comment>
<comment type="cofactor">
    <cofactor evidence="1">
        <name>Mg(2+)</name>
        <dbReference type="ChEBI" id="CHEBI:18420"/>
    </cofactor>
    <text evidence="1">Binds 1 Mg(2+) ion per subunit.</text>
</comment>
<comment type="cofactor">
    <cofactor evidence="1">
        <name>Zn(2+)</name>
        <dbReference type="ChEBI" id="CHEBI:29105"/>
    </cofactor>
    <text evidence="1">Binds 1 zinc ion per subunit.</text>
</comment>
<comment type="pathway">
    <text evidence="1">Amino-acid biosynthesis; L-histidine biosynthesis; L-histidine from 5-phospho-alpha-D-ribose 1-diphosphate: step 3/9.</text>
</comment>
<comment type="subunit">
    <text evidence="1">Homodimer.</text>
</comment>
<comment type="subcellular location">
    <subcellularLocation>
        <location evidence="1">Cytoplasm</location>
    </subcellularLocation>
</comment>
<comment type="similarity">
    <text evidence="1">Belongs to the PRA-CH family.</text>
</comment>
<protein>
    <recommendedName>
        <fullName evidence="1">Phosphoribosyl-AMP cyclohydrolase</fullName>
        <shortName evidence="1">PRA-CH</shortName>
        <ecNumber evidence="1">3.5.4.19</ecNumber>
    </recommendedName>
</protein>
<gene>
    <name evidence="1" type="primary">hisI</name>
    <name type="ordered locus">Dshi_1515</name>
</gene>
<accession>A8LK58</accession>
<proteinExistence type="inferred from homology"/>
<dbReference type="EC" id="3.5.4.19" evidence="1"/>
<dbReference type="EMBL" id="CP000830">
    <property type="protein sequence ID" value="ABV93257.1"/>
    <property type="molecule type" value="Genomic_DNA"/>
</dbReference>
<dbReference type="RefSeq" id="WP_012178187.1">
    <property type="nucleotide sequence ID" value="NC_009952.1"/>
</dbReference>
<dbReference type="SMR" id="A8LK58"/>
<dbReference type="STRING" id="398580.Dshi_1515"/>
<dbReference type="KEGG" id="dsh:Dshi_1515"/>
<dbReference type="eggNOG" id="COG0139">
    <property type="taxonomic scope" value="Bacteria"/>
</dbReference>
<dbReference type="HOGENOM" id="CLU_048577_5_2_5"/>
<dbReference type="OrthoDB" id="9795769at2"/>
<dbReference type="UniPathway" id="UPA00031">
    <property type="reaction ID" value="UER00008"/>
</dbReference>
<dbReference type="Proteomes" id="UP000006833">
    <property type="component" value="Chromosome"/>
</dbReference>
<dbReference type="GO" id="GO:0005737">
    <property type="term" value="C:cytoplasm"/>
    <property type="evidence" value="ECO:0007669"/>
    <property type="project" value="UniProtKB-SubCell"/>
</dbReference>
<dbReference type="GO" id="GO:0000287">
    <property type="term" value="F:magnesium ion binding"/>
    <property type="evidence" value="ECO:0007669"/>
    <property type="project" value="UniProtKB-UniRule"/>
</dbReference>
<dbReference type="GO" id="GO:0004635">
    <property type="term" value="F:phosphoribosyl-AMP cyclohydrolase activity"/>
    <property type="evidence" value="ECO:0007669"/>
    <property type="project" value="UniProtKB-UniRule"/>
</dbReference>
<dbReference type="GO" id="GO:0008270">
    <property type="term" value="F:zinc ion binding"/>
    <property type="evidence" value="ECO:0007669"/>
    <property type="project" value="UniProtKB-UniRule"/>
</dbReference>
<dbReference type="GO" id="GO:0000105">
    <property type="term" value="P:L-histidine biosynthetic process"/>
    <property type="evidence" value="ECO:0007669"/>
    <property type="project" value="UniProtKB-UniRule"/>
</dbReference>
<dbReference type="FunFam" id="3.10.20.810:FF:000001">
    <property type="entry name" value="Histidine biosynthesis bifunctional protein HisIE"/>
    <property type="match status" value="1"/>
</dbReference>
<dbReference type="Gene3D" id="3.10.20.810">
    <property type="entry name" value="Phosphoribosyl-AMP cyclohydrolase"/>
    <property type="match status" value="1"/>
</dbReference>
<dbReference type="HAMAP" id="MF_01021">
    <property type="entry name" value="HisI"/>
    <property type="match status" value="1"/>
</dbReference>
<dbReference type="InterPro" id="IPR026660">
    <property type="entry name" value="PRA-CH"/>
</dbReference>
<dbReference type="InterPro" id="IPR002496">
    <property type="entry name" value="PRib_AMP_CycHydrolase_dom"/>
</dbReference>
<dbReference type="InterPro" id="IPR038019">
    <property type="entry name" value="PRib_AMP_CycHydrolase_sf"/>
</dbReference>
<dbReference type="NCBIfam" id="NF000768">
    <property type="entry name" value="PRK00051.1"/>
    <property type="match status" value="1"/>
</dbReference>
<dbReference type="PANTHER" id="PTHR42945">
    <property type="entry name" value="HISTIDINE BIOSYNTHESIS BIFUNCTIONAL PROTEIN"/>
    <property type="match status" value="1"/>
</dbReference>
<dbReference type="PANTHER" id="PTHR42945:SF1">
    <property type="entry name" value="HISTIDINE BIOSYNTHESIS BIFUNCTIONAL PROTEIN HIS7"/>
    <property type="match status" value="1"/>
</dbReference>
<dbReference type="Pfam" id="PF01502">
    <property type="entry name" value="PRA-CH"/>
    <property type="match status" value="1"/>
</dbReference>
<dbReference type="SUPFAM" id="SSF141734">
    <property type="entry name" value="HisI-like"/>
    <property type="match status" value="1"/>
</dbReference>
<organism>
    <name type="scientific">Dinoroseobacter shibae (strain DSM 16493 / NCIMB 14021 / DFL 12)</name>
    <dbReference type="NCBI Taxonomy" id="398580"/>
    <lineage>
        <taxon>Bacteria</taxon>
        <taxon>Pseudomonadati</taxon>
        <taxon>Pseudomonadota</taxon>
        <taxon>Alphaproteobacteria</taxon>
        <taxon>Rhodobacterales</taxon>
        <taxon>Roseobacteraceae</taxon>
        <taxon>Dinoroseobacter</taxon>
    </lineage>
</organism>
<sequence>MEFDPASLRYDDQGLIPAIAQDAASGEVLMMAWMNAEAVARTLETGRVTYWSRSRQAFWIKGESSGHVQTLVEMRVDCDRDCLLLQVRQEGPACHTNRRTCFYTAIRDGAEVELMAPMV</sequence>
<feature type="chain" id="PRO_1000084179" description="Phosphoribosyl-AMP cyclohydrolase">
    <location>
        <begin position="1"/>
        <end position="119"/>
    </location>
</feature>
<feature type="binding site" evidence="1">
    <location>
        <position position="77"/>
    </location>
    <ligand>
        <name>Mg(2+)</name>
        <dbReference type="ChEBI" id="CHEBI:18420"/>
    </ligand>
</feature>
<feature type="binding site" evidence="1">
    <location>
        <position position="78"/>
    </location>
    <ligand>
        <name>Zn(2+)</name>
        <dbReference type="ChEBI" id="CHEBI:29105"/>
        <note>ligand shared between dimeric partners</note>
    </ligand>
</feature>
<feature type="binding site" evidence="1">
    <location>
        <position position="79"/>
    </location>
    <ligand>
        <name>Mg(2+)</name>
        <dbReference type="ChEBI" id="CHEBI:18420"/>
    </ligand>
</feature>
<feature type="binding site" evidence="1">
    <location>
        <position position="81"/>
    </location>
    <ligand>
        <name>Mg(2+)</name>
        <dbReference type="ChEBI" id="CHEBI:18420"/>
    </ligand>
</feature>
<feature type="binding site" evidence="1">
    <location>
        <position position="94"/>
    </location>
    <ligand>
        <name>Zn(2+)</name>
        <dbReference type="ChEBI" id="CHEBI:29105"/>
        <note>ligand shared between dimeric partners</note>
    </ligand>
</feature>
<feature type="binding site" evidence="1">
    <location>
        <position position="101"/>
    </location>
    <ligand>
        <name>Zn(2+)</name>
        <dbReference type="ChEBI" id="CHEBI:29105"/>
        <note>ligand shared between dimeric partners</note>
    </ligand>
</feature>